<gene>
    <name evidence="1" type="primary">addB</name>
    <name type="ordered locus">SAS0836</name>
</gene>
<name>ADDB_STAAS</name>
<evidence type="ECO:0000255" key="1">
    <source>
        <dbReference type="HAMAP-Rule" id="MF_01452"/>
    </source>
</evidence>
<dbReference type="EC" id="3.1.-.-" evidence="1"/>
<dbReference type="EMBL" id="BX571857">
    <property type="protein sequence ID" value="CAG42611.1"/>
    <property type="molecule type" value="Genomic_DNA"/>
</dbReference>
<dbReference type="RefSeq" id="WP_000172347.1">
    <property type="nucleotide sequence ID" value="NC_002953.3"/>
</dbReference>
<dbReference type="SMR" id="Q6GAW0"/>
<dbReference type="KEGG" id="sas:SAS0836"/>
<dbReference type="HOGENOM" id="CLU_007838_0_0_9"/>
<dbReference type="GO" id="GO:0051539">
    <property type="term" value="F:4 iron, 4 sulfur cluster binding"/>
    <property type="evidence" value="ECO:0007669"/>
    <property type="project" value="UniProtKB-KW"/>
</dbReference>
<dbReference type="GO" id="GO:0008409">
    <property type="term" value="F:5'-3' exonuclease activity"/>
    <property type="evidence" value="ECO:0007669"/>
    <property type="project" value="UniProtKB-UniRule"/>
</dbReference>
<dbReference type="GO" id="GO:0005524">
    <property type="term" value="F:ATP binding"/>
    <property type="evidence" value="ECO:0007669"/>
    <property type="project" value="UniProtKB-UniRule"/>
</dbReference>
<dbReference type="GO" id="GO:0003690">
    <property type="term" value="F:double-stranded DNA binding"/>
    <property type="evidence" value="ECO:0007669"/>
    <property type="project" value="UniProtKB-UniRule"/>
</dbReference>
<dbReference type="GO" id="GO:0004386">
    <property type="term" value="F:helicase activity"/>
    <property type="evidence" value="ECO:0007669"/>
    <property type="project" value="UniProtKB-KW"/>
</dbReference>
<dbReference type="GO" id="GO:0046872">
    <property type="term" value="F:metal ion binding"/>
    <property type="evidence" value="ECO:0007669"/>
    <property type="project" value="UniProtKB-KW"/>
</dbReference>
<dbReference type="GO" id="GO:0000724">
    <property type="term" value="P:double-strand break repair via homologous recombination"/>
    <property type="evidence" value="ECO:0007669"/>
    <property type="project" value="UniProtKB-UniRule"/>
</dbReference>
<dbReference type="Gene3D" id="3.90.320.10">
    <property type="match status" value="1"/>
</dbReference>
<dbReference type="Gene3D" id="3.40.50.300">
    <property type="entry name" value="P-loop containing nucleotide triphosphate hydrolases"/>
    <property type="match status" value="4"/>
</dbReference>
<dbReference type="HAMAP" id="MF_01452">
    <property type="entry name" value="AddB_type1"/>
    <property type="match status" value="1"/>
</dbReference>
<dbReference type="InterPro" id="IPR049035">
    <property type="entry name" value="ADDB_N"/>
</dbReference>
<dbReference type="InterPro" id="IPR014140">
    <property type="entry name" value="DNA_helicase_suAddB"/>
</dbReference>
<dbReference type="InterPro" id="IPR014017">
    <property type="entry name" value="DNA_helicase_UvrD-like_C"/>
</dbReference>
<dbReference type="InterPro" id="IPR027417">
    <property type="entry name" value="P-loop_NTPase"/>
</dbReference>
<dbReference type="InterPro" id="IPR011604">
    <property type="entry name" value="PDDEXK-like_dom_sf"/>
</dbReference>
<dbReference type="InterPro" id="IPR038726">
    <property type="entry name" value="PDDEXK_AddAB-type"/>
</dbReference>
<dbReference type="NCBIfam" id="TIGR02773">
    <property type="entry name" value="addB_Gpos"/>
    <property type="match status" value="1"/>
</dbReference>
<dbReference type="PANTHER" id="PTHR30591">
    <property type="entry name" value="RECBCD ENZYME SUBUNIT RECC"/>
    <property type="match status" value="1"/>
</dbReference>
<dbReference type="PANTHER" id="PTHR30591:SF1">
    <property type="entry name" value="RECBCD ENZYME SUBUNIT RECC"/>
    <property type="match status" value="1"/>
</dbReference>
<dbReference type="Pfam" id="PF21445">
    <property type="entry name" value="ADDB_N"/>
    <property type="match status" value="1"/>
</dbReference>
<dbReference type="Pfam" id="PF12705">
    <property type="entry name" value="PDDEXK_1"/>
    <property type="match status" value="1"/>
</dbReference>
<dbReference type="Pfam" id="PF13361">
    <property type="entry name" value="UvrD_C"/>
    <property type="match status" value="1"/>
</dbReference>
<dbReference type="SUPFAM" id="SSF52540">
    <property type="entry name" value="P-loop containing nucleoside triphosphate hydrolases"/>
    <property type="match status" value="1"/>
</dbReference>
<dbReference type="PROSITE" id="PS51198">
    <property type="entry name" value="UVRD_HELICASE_ATP_BIND"/>
    <property type="match status" value="1"/>
</dbReference>
<dbReference type="PROSITE" id="PS51217">
    <property type="entry name" value="UVRD_HELICASE_CTER"/>
    <property type="match status" value="1"/>
</dbReference>
<keyword id="KW-0004">4Fe-4S</keyword>
<keyword id="KW-0067">ATP-binding</keyword>
<keyword id="KW-0227">DNA damage</keyword>
<keyword id="KW-0234">DNA repair</keyword>
<keyword id="KW-0238">DNA-binding</keyword>
<keyword id="KW-0269">Exonuclease</keyword>
<keyword id="KW-0347">Helicase</keyword>
<keyword id="KW-0378">Hydrolase</keyword>
<keyword id="KW-0408">Iron</keyword>
<keyword id="KW-0411">Iron-sulfur</keyword>
<keyword id="KW-0479">Metal-binding</keyword>
<keyword id="KW-0540">Nuclease</keyword>
<keyword id="KW-0547">Nucleotide-binding</keyword>
<reference key="1">
    <citation type="journal article" date="2004" name="Proc. Natl. Acad. Sci. U.S.A.">
        <title>Complete genomes of two clinical Staphylococcus aureus strains: evidence for the rapid evolution of virulence and drug resistance.</title>
        <authorList>
            <person name="Holden M.T.G."/>
            <person name="Feil E.J."/>
            <person name="Lindsay J.A."/>
            <person name="Peacock S.J."/>
            <person name="Day N.P.J."/>
            <person name="Enright M.C."/>
            <person name="Foster T.J."/>
            <person name="Moore C.E."/>
            <person name="Hurst L."/>
            <person name="Atkin R."/>
            <person name="Barron A."/>
            <person name="Bason N."/>
            <person name="Bentley S.D."/>
            <person name="Chillingworth C."/>
            <person name="Chillingworth T."/>
            <person name="Churcher C."/>
            <person name="Clark L."/>
            <person name="Corton C."/>
            <person name="Cronin A."/>
            <person name="Doggett J."/>
            <person name="Dowd L."/>
            <person name="Feltwell T."/>
            <person name="Hance Z."/>
            <person name="Harris B."/>
            <person name="Hauser H."/>
            <person name="Holroyd S."/>
            <person name="Jagels K."/>
            <person name="James K.D."/>
            <person name="Lennard N."/>
            <person name="Line A."/>
            <person name="Mayes R."/>
            <person name="Moule S."/>
            <person name="Mungall K."/>
            <person name="Ormond D."/>
            <person name="Quail M.A."/>
            <person name="Rabbinowitsch E."/>
            <person name="Rutherford K.M."/>
            <person name="Sanders M."/>
            <person name="Sharp S."/>
            <person name="Simmonds M."/>
            <person name="Stevens K."/>
            <person name="Whitehead S."/>
            <person name="Barrell B.G."/>
            <person name="Spratt B.G."/>
            <person name="Parkhill J."/>
        </authorList>
    </citation>
    <scope>NUCLEOTIDE SEQUENCE [LARGE SCALE GENOMIC DNA]</scope>
    <source>
        <strain>MSSA476</strain>
    </source>
</reference>
<comment type="function">
    <text evidence="1">The heterodimer acts as both an ATP-dependent DNA helicase and an ATP-dependent, dual-direction single-stranded exonuclease. Recognizes the chi site generating a DNA molecule suitable for the initiation of homologous recombination. The AddB subunit has 5' -&gt; 3' nuclease activity but not helicase activity.</text>
</comment>
<comment type="cofactor">
    <cofactor evidence="1">
        <name>Mg(2+)</name>
        <dbReference type="ChEBI" id="CHEBI:18420"/>
    </cofactor>
</comment>
<comment type="cofactor">
    <cofactor evidence="1">
        <name>[4Fe-4S] cluster</name>
        <dbReference type="ChEBI" id="CHEBI:49883"/>
    </cofactor>
    <text evidence="1">Binds 1 [4Fe-4S] cluster.</text>
</comment>
<comment type="subunit">
    <text evidence="1">Heterodimer of AddA and AddB.</text>
</comment>
<comment type="miscellaneous">
    <text evidence="1">Despite having conserved helicase domains, this subunit does not have helicase activity.</text>
</comment>
<comment type="similarity">
    <text evidence="1">Belongs to the helicase family. AddB/RexB type 1 subfamily.</text>
</comment>
<protein>
    <recommendedName>
        <fullName evidence="1">ATP-dependent helicase/deoxyribonuclease subunit B</fullName>
        <ecNumber evidence="1">3.1.-.-</ecNumber>
    </recommendedName>
    <alternativeName>
        <fullName evidence="1">ATP-dependent helicase/nuclease subunit AddB</fullName>
    </alternativeName>
</protein>
<feature type="chain" id="PRO_0000379209" description="ATP-dependent helicase/deoxyribonuclease subunit B">
    <location>
        <begin position="1"/>
        <end position="1158"/>
    </location>
</feature>
<feature type="domain" description="UvrD-like helicase ATP-binding" evidence="1">
    <location>
        <begin position="1"/>
        <end position="275"/>
    </location>
</feature>
<feature type="domain" description="UvrD-like helicase C-terminal" evidence="1">
    <location>
        <begin position="269"/>
        <end position="583"/>
    </location>
</feature>
<feature type="binding site" evidence="1">
    <location>
        <begin position="8"/>
        <end position="15"/>
    </location>
    <ligand>
        <name>ATP</name>
        <dbReference type="ChEBI" id="CHEBI:30616"/>
    </ligand>
</feature>
<feature type="binding site" evidence="1">
    <location>
        <position position="784"/>
    </location>
    <ligand>
        <name>[4Fe-4S] cluster</name>
        <dbReference type="ChEBI" id="CHEBI:49883"/>
    </ligand>
</feature>
<feature type="binding site" evidence="1">
    <location>
        <position position="1112"/>
    </location>
    <ligand>
        <name>[4Fe-4S] cluster</name>
        <dbReference type="ChEBI" id="CHEBI:49883"/>
    </ligand>
</feature>
<feature type="binding site" evidence="1">
    <location>
        <position position="1115"/>
    </location>
    <ligand>
        <name>[4Fe-4S] cluster</name>
        <dbReference type="ChEBI" id="CHEBI:49883"/>
    </ligand>
</feature>
<feature type="binding site" evidence="1">
    <location>
        <position position="1121"/>
    </location>
    <ligand>
        <name>[4Fe-4S] cluster</name>
        <dbReference type="ChEBI" id="CHEBI:49883"/>
    </ligand>
</feature>
<organism>
    <name type="scientific">Staphylococcus aureus (strain MSSA476)</name>
    <dbReference type="NCBI Taxonomy" id="282459"/>
    <lineage>
        <taxon>Bacteria</taxon>
        <taxon>Bacillati</taxon>
        <taxon>Bacillota</taxon>
        <taxon>Bacilli</taxon>
        <taxon>Bacillales</taxon>
        <taxon>Staphylococcaceae</taxon>
        <taxon>Staphylococcus</taxon>
    </lineage>
</organism>
<sequence length="1158" mass="134699">MTLHAYLGRAGTGKSTKMLTEIKQKMKADPLGDPIILIAPTQSTFQLEQAFVNDPELNGSLRTEVLHFERLSHRIFQEVGSYSEQKLSKAATEMMIYNIVQEQQKYLKLYQSQAKYYGFSEKLTEQIQDFKKYAVTPEHLEHFIADKNMQTRTKNKLEDIALIYREFEQRIQNEFITGEDSLQYFIDCMPKSEWLKRADIYIDGFHNFSTIEYLIIKGLIKYAKSVTIILTTDGNHDQFSLFRKPSEVLRHIEEIANELNISIERQYFNQLYRFNNQDLKHLEQEFDVLQINRVACQGHINILESATMREEINEIARRIIVDIRDKQLRYQDIAILYRDESYAYLFDSILPLYNIPYNIDTKRSMTHHPVMEMIRSLIEVIQSNWQVNPMLRLLKTDVLTASYLKSAYLVDLLENFVLERGIYGKRWLDDELFNVEHFSKMGRKAHKLTEDERNTFEQVVKLKKDVIDKILHFEKQMSQAETVKDFATAFYESMEYFELPNQLMTERDELDLNGNHEKAEEIDQIWNGLIQILDDLVLVFGDEPMSMERFLEVFDIGLEQLEFVMIPQTLDQVSIGTMDLAKVDNKQHVFLVGMNDGTMPQPVTASSLITDEEKKYFEQQANVELSPTSDILQMDEAFVCYIAMTRARQDVTFSYRLMGSSGDDKEISPFLNQIQSLFNQLEITNIPQYHEVNPLSLMQHAKQTKITLFEALRAWLYDEIVADSWLDAYQVIRDSDHLNQGLDYLMSALTFDNETVKLGETLSKDLYGKEINASVSRFEGYQQCPFKHYASHGLKLNERTKYELQNFDLGDIFHSVLKYISERINGDFKQLDLKKIRQLTNEALEEILPKVQFNLLNSSAYYRYLSRRIGAIVETTLSALKYQGTYSKFMPKHFETSFRRKPRTNDELIAQTLTTTQGIPINIRGQIDRIDTYTKNDTSFVNIIDYKSSEGSATLDLTKVYYGMQMQMMTYMDIVLQNKQRLGLTDIVKPGGLLYFHVHEPRIKFKSWSDIDEDKLEQDLIKKFKLSGLVNADQTVIDALDIRLEPKFTSDIVPVGLNKDGSLSKRGSQVADEATIYKFIQHNKENFIETASNIMDGHTEVAPLKYKQKLPCAFCSYQSVCHVDGMIDSKRYRTVDETINPIEAIQNININDEFGGEQ</sequence>
<proteinExistence type="inferred from homology"/>
<accession>Q6GAW0</accession>